<comment type="function">
    <text evidence="1">Catalyzes the anti-1,4-elimination of the C-3 phosphate and the C-6 proR hydrogen from 5-enolpyruvylshikimate-3-phosphate (EPSP) to yield chorismate, which is the branch point compound that serves as the starting substrate for the three terminal pathways of aromatic amino acid biosynthesis. This reaction introduces a second double bond into the aromatic ring system.</text>
</comment>
<comment type="catalytic activity">
    <reaction evidence="1">
        <text>5-O-(1-carboxyvinyl)-3-phosphoshikimate = chorismate + phosphate</text>
        <dbReference type="Rhea" id="RHEA:21020"/>
        <dbReference type="ChEBI" id="CHEBI:29748"/>
        <dbReference type="ChEBI" id="CHEBI:43474"/>
        <dbReference type="ChEBI" id="CHEBI:57701"/>
        <dbReference type="EC" id="4.2.3.5"/>
    </reaction>
</comment>
<comment type="cofactor">
    <cofactor evidence="1">
        <name>FMNH2</name>
        <dbReference type="ChEBI" id="CHEBI:57618"/>
    </cofactor>
    <text evidence="1">Reduced FMN (FMNH(2)).</text>
</comment>
<comment type="pathway">
    <text evidence="1">Metabolic intermediate biosynthesis; chorismate biosynthesis; chorismate from D-erythrose 4-phosphate and phosphoenolpyruvate: step 7/7.</text>
</comment>
<comment type="subunit">
    <text evidence="1">Homotetramer.</text>
</comment>
<comment type="similarity">
    <text evidence="1">Belongs to the chorismate synthase family.</text>
</comment>
<sequence length="384" mass="41957">MRYMTAGESHGKGLSVIIEGIPSGLIIDFDQVQREMTRRQGGYGRGRRMQIEQDAVDVRGGIRHGYTTGAPISLFIENKDHTHWTKVMQAEPLQEELERPRTLTRPRPGHADLVGGLKYGHRDLRDVLERSSARETAARVAVGAIAKQLLGQLGIDVFSHVRSIGGIDADFVNPMEYREVIEASPVRCADEAAAERMMAAIDQAKKDGDTLGGEVEVVVTDMMPGIGSFTQNETKLDSRIARAVISVNAMKAVGFGDGFDLARRKGSTVQDEILHDETGYFRKTNHLGGIEGGMSTGMPIRVQVAMKPIPTLYRPLQSVDIETKEPFVAQVERSDACAVPAAAVVLEAVVAVEIAAAVLEMFGTSTLDRLKQAVTAYREEVRLF</sequence>
<protein>
    <recommendedName>
        <fullName evidence="1">Chorismate synthase</fullName>
        <shortName evidence="1">CS</shortName>
        <ecNumber evidence="1">4.2.3.5</ecNumber>
    </recommendedName>
    <alternativeName>
        <fullName evidence="1">5-enolpyruvylshikimate-3-phosphate phospholyase</fullName>
    </alternativeName>
</protein>
<organism>
    <name type="scientific">Exiguobacterium sibiricum (strain DSM 17290 / CCUG 55495 / CIP 109462 / JCM 13490 / 255-15)</name>
    <dbReference type="NCBI Taxonomy" id="262543"/>
    <lineage>
        <taxon>Bacteria</taxon>
        <taxon>Bacillati</taxon>
        <taxon>Bacillota</taxon>
        <taxon>Bacilli</taxon>
        <taxon>Bacillales</taxon>
        <taxon>Bacillales Family XII. Incertae Sedis</taxon>
        <taxon>Exiguobacterium</taxon>
    </lineage>
</organism>
<evidence type="ECO:0000255" key="1">
    <source>
        <dbReference type="HAMAP-Rule" id="MF_00300"/>
    </source>
</evidence>
<gene>
    <name evidence="1" type="primary">aroC</name>
    <name type="ordered locus">Exig_1795</name>
</gene>
<feature type="chain" id="PRO_1000115352" description="Chorismate synthase">
    <location>
        <begin position="1"/>
        <end position="384"/>
    </location>
</feature>
<feature type="binding site" evidence="1">
    <location>
        <position position="39"/>
    </location>
    <ligand>
        <name>NADP(+)</name>
        <dbReference type="ChEBI" id="CHEBI:58349"/>
    </ligand>
</feature>
<feature type="binding site" evidence="1">
    <location>
        <position position="45"/>
    </location>
    <ligand>
        <name>NADP(+)</name>
        <dbReference type="ChEBI" id="CHEBI:58349"/>
    </ligand>
</feature>
<feature type="binding site" evidence="1">
    <location>
        <begin position="130"/>
        <end position="132"/>
    </location>
    <ligand>
        <name>FMN</name>
        <dbReference type="ChEBI" id="CHEBI:58210"/>
    </ligand>
</feature>
<feature type="binding site" evidence="1">
    <location>
        <begin position="248"/>
        <end position="249"/>
    </location>
    <ligand>
        <name>FMN</name>
        <dbReference type="ChEBI" id="CHEBI:58210"/>
    </ligand>
</feature>
<feature type="binding site" evidence="1">
    <location>
        <position position="292"/>
    </location>
    <ligand>
        <name>FMN</name>
        <dbReference type="ChEBI" id="CHEBI:58210"/>
    </ligand>
</feature>
<feature type="binding site" evidence="1">
    <location>
        <begin position="307"/>
        <end position="311"/>
    </location>
    <ligand>
        <name>FMN</name>
        <dbReference type="ChEBI" id="CHEBI:58210"/>
    </ligand>
</feature>
<feature type="binding site" evidence="1">
    <location>
        <position position="333"/>
    </location>
    <ligand>
        <name>FMN</name>
        <dbReference type="ChEBI" id="CHEBI:58210"/>
    </ligand>
</feature>
<dbReference type="EC" id="4.2.3.5" evidence="1"/>
<dbReference type="EMBL" id="CP001022">
    <property type="protein sequence ID" value="ACB61247.1"/>
    <property type="molecule type" value="Genomic_DNA"/>
</dbReference>
<dbReference type="RefSeq" id="WP_012370665.1">
    <property type="nucleotide sequence ID" value="NC_010556.1"/>
</dbReference>
<dbReference type="SMR" id="B1YI20"/>
<dbReference type="STRING" id="262543.Exig_1795"/>
<dbReference type="KEGG" id="esi:Exig_1795"/>
<dbReference type="eggNOG" id="COG0082">
    <property type="taxonomic scope" value="Bacteria"/>
</dbReference>
<dbReference type="HOGENOM" id="CLU_034547_2_0_9"/>
<dbReference type="OrthoDB" id="9771806at2"/>
<dbReference type="UniPathway" id="UPA00053">
    <property type="reaction ID" value="UER00090"/>
</dbReference>
<dbReference type="Proteomes" id="UP000001681">
    <property type="component" value="Chromosome"/>
</dbReference>
<dbReference type="GO" id="GO:0005829">
    <property type="term" value="C:cytosol"/>
    <property type="evidence" value="ECO:0007669"/>
    <property type="project" value="TreeGrafter"/>
</dbReference>
<dbReference type="GO" id="GO:0004107">
    <property type="term" value="F:chorismate synthase activity"/>
    <property type="evidence" value="ECO:0007669"/>
    <property type="project" value="UniProtKB-UniRule"/>
</dbReference>
<dbReference type="GO" id="GO:0010181">
    <property type="term" value="F:FMN binding"/>
    <property type="evidence" value="ECO:0007669"/>
    <property type="project" value="TreeGrafter"/>
</dbReference>
<dbReference type="GO" id="GO:0008652">
    <property type="term" value="P:amino acid biosynthetic process"/>
    <property type="evidence" value="ECO:0007669"/>
    <property type="project" value="UniProtKB-KW"/>
</dbReference>
<dbReference type="GO" id="GO:0009073">
    <property type="term" value="P:aromatic amino acid family biosynthetic process"/>
    <property type="evidence" value="ECO:0007669"/>
    <property type="project" value="UniProtKB-KW"/>
</dbReference>
<dbReference type="GO" id="GO:0009423">
    <property type="term" value="P:chorismate biosynthetic process"/>
    <property type="evidence" value="ECO:0007669"/>
    <property type="project" value="UniProtKB-UniRule"/>
</dbReference>
<dbReference type="CDD" id="cd07304">
    <property type="entry name" value="Chorismate_synthase"/>
    <property type="match status" value="1"/>
</dbReference>
<dbReference type="FunFam" id="3.60.150.10:FF:000002">
    <property type="entry name" value="Chorismate synthase"/>
    <property type="match status" value="1"/>
</dbReference>
<dbReference type="Gene3D" id="3.60.150.10">
    <property type="entry name" value="Chorismate synthase AroC"/>
    <property type="match status" value="1"/>
</dbReference>
<dbReference type="HAMAP" id="MF_00300">
    <property type="entry name" value="Chorismate_synth"/>
    <property type="match status" value="1"/>
</dbReference>
<dbReference type="InterPro" id="IPR000453">
    <property type="entry name" value="Chorismate_synth"/>
</dbReference>
<dbReference type="InterPro" id="IPR035904">
    <property type="entry name" value="Chorismate_synth_AroC_sf"/>
</dbReference>
<dbReference type="InterPro" id="IPR020541">
    <property type="entry name" value="Chorismate_synthase_CS"/>
</dbReference>
<dbReference type="NCBIfam" id="TIGR00033">
    <property type="entry name" value="aroC"/>
    <property type="match status" value="1"/>
</dbReference>
<dbReference type="NCBIfam" id="NF003793">
    <property type="entry name" value="PRK05382.1"/>
    <property type="match status" value="1"/>
</dbReference>
<dbReference type="PANTHER" id="PTHR21085">
    <property type="entry name" value="CHORISMATE SYNTHASE"/>
    <property type="match status" value="1"/>
</dbReference>
<dbReference type="PANTHER" id="PTHR21085:SF0">
    <property type="entry name" value="CHORISMATE SYNTHASE"/>
    <property type="match status" value="1"/>
</dbReference>
<dbReference type="Pfam" id="PF01264">
    <property type="entry name" value="Chorismate_synt"/>
    <property type="match status" value="1"/>
</dbReference>
<dbReference type="PIRSF" id="PIRSF001456">
    <property type="entry name" value="Chorismate_synth"/>
    <property type="match status" value="1"/>
</dbReference>
<dbReference type="SUPFAM" id="SSF103263">
    <property type="entry name" value="Chorismate synthase, AroC"/>
    <property type="match status" value="1"/>
</dbReference>
<dbReference type="PROSITE" id="PS00787">
    <property type="entry name" value="CHORISMATE_SYNTHASE_1"/>
    <property type="match status" value="1"/>
</dbReference>
<dbReference type="PROSITE" id="PS00788">
    <property type="entry name" value="CHORISMATE_SYNTHASE_2"/>
    <property type="match status" value="1"/>
</dbReference>
<accession>B1YI20</accession>
<keyword id="KW-0028">Amino-acid biosynthesis</keyword>
<keyword id="KW-0057">Aromatic amino acid biosynthesis</keyword>
<keyword id="KW-0274">FAD</keyword>
<keyword id="KW-0285">Flavoprotein</keyword>
<keyword id="KW-0288">FMN</keyword>
<keyword id="KW-0456">Lyase</keyword>
<keyword id="KW-0521">NADP</keyword>
<keyword id="KW-1185">Reference proteome</keyword>
<proteinExistence type="inferred from homology"/>
<reference key="1">
    <citation type="submission" date="2008-04" db="EMBL/GenBank/DDBJ databases">
        <title>Complete sequence of chromosome of Exiguobacterium sibiricum 255-15.</title>
        <authorList>
            <consortium name="US DOE Joint Genome Institute"/>
            <person name="Copeland A."/>
            <person name="Lucas S."/>
            <person name="Lapidus A."/>
            <person name="Glavina del Rio T."/>
            <person name="Dalin E."/>
            <person name="Tice H."/>
            <person name="Bruce D."/>
            <person name="Goodwin L."/>
            <person name="Pitluck S."/>
            <person name="Kiss H."/>
            <person name="Chertkov O."/>
            <person name="Monk C."/>
            <person name="Brettin T."/>
            <person name="Detter J.C."/>
            <person name="Han C."/>
            <person name="Kuske C.R."/>
            <person name="Schmutz J."/>
            <person name="Larimer F."/>
            <person name="Land M."/>
            <person name="Hauser L."/>
            <person name="Kyrpides N."/>
            <person name="Mikhailova N."/>
            <person name="Vishnivetskaya T."/>
            <person name="Rodrigues D.F."/>
            <person name="Gilichinsky D."/>
            <person name="Tiedje J."/>
            <person name="Richardson P."/>
        </authorList>
    </citation>
    <scope>NUCLEOTIDE SEQUENCE [LARGE SCALE GENOMIC DNA]</scope>
    <source>
        <strain>DSM 17290 / CCUG 55495 / CIP 109462 / JCM 13490 / 255-15</strain>
    </source>
</reference>
<name>AROC_EXIS2</name>